<sequence>MANKPSAEELKKNLSDMQFYVTQNHGTEPPFTGRLLHNKRDGVYHCLICDAPLFHSQTKYDSGCGWPSFYEPVSEESIRYIKDLSHGVQRIEIRCGNCDAHLGHVFPDGPQPTGERYCVNSASLRFTDGENGEEING</sequence>
<reference key="1">
    <citation type="journal article" date="2005" name="Nucleic Acids Res.">
        <title>Genome dynamics and diversity of Shigella species, the etiologic agents of bacillary dysentery.</title>
        <authorList>
            <person name="Yang F."/>
            <person name="Yang J."/>
            <person name="Zhang X."/>
            <person name="Chen L."/>
            <person name="Jiang Y."/>
            <person name="Yan Y."/>
            <person name="Tang X."/>
            <person name="Wang J."/>
            <person name="Xiong Z."/>
            <person name="Dong J."/>
            <person name="Xue Y."/>
            <person name="Zhu Y."/>
            <person name="Xu X."/>
            <person name="Sun L."/>
            <person name="Chen S."/>
            <person name="Nie H."/>
            <person name="Peng J."/>
            <person name="Xu J."/>
            <person name="Wang Y."/>
            <person name="Yuan Z."/>
            <person name="Wen Y."/>
            <person name="Yao Z."/>
            <person name="Shen Y."/>
            <person name="Qiang B."/>
            <person name="Hou Y."/>
            <person name="Yu J."/>
            <person name="Jin Q."/>
        </authorList>
    </citation>
    <scope>NUCLEOTIDE SEQUENCE [LARGE SCALE GENOMIC DNA]</scope>
    <source>
        <strain>Sd197</strain>
    </source>
</reference>
<organism>
    <name type="scientific">Shigella dysenteriae serotype 1 (strain Sd197)</name>
    <dbReference type="NCBI Taxonomy" id="300267"/>
    <lineage>
        <taxon>Bacteria</taxon>
        <taxon>Pseudomonadati</taxon>
        <taxon>Pseudomonadota</taxon>
        <taxon>Gammaproteobacteria</taxon>
        <taxon>Enterobacterales</taxon>
        <taxon>Enterobacteriaceae</taxon>
        <taxon>Shigella</taxon>
    </lineage>
</organism>
<comment type="catalytic activity">
    <reaction evidence="1">
        <text>L-methionyl-[protein] + [thioredoxin]-disulfide + H2O = L-methionyl-(R)-S-oxide-[protein] + [thioredoxin]-dithiol</text>
        <dbReference type="Rhea" id="RHEA:24164"/>
        <dbReference type="Rhea" id="RHEA-COMP:10698"/>
        <dbReference type="Rhea" id="RHEA-COMP:10700"/>
        <dbReference type="Rhea" id="RHEA-COMP:12313"/>
        <dbReference type="Rhea" id="RHEA-COMP:12314"/>
        <dbReference type="ChEBI" id="CHEBI:15377"/>
        <dbReference type="ChEBI" id="CHEBI:16044"/>
        <dbReference type="ChEBI" id="CHEBI:29950"/>
        <dbReference type="ChEBI" id="CHEBI:45764"/>
        <dbReference type="ChEBI" id="CHEBI:50058"/>
        <dbReference type="EC" id="1.8.4.12"/>
    </reaction>
</comment>
<comment type="cofactor">
    <cofactor evidence="1">
        <name>Zn(2+)</name>
        <dbReference type="ChEBI" id="CHEBI:29105"/>
    </cofactor>
    <text evidence="1">Binds 1 zinc ion per subunit. The zinc ion is important for the structural integrity of the protein.</text>
</comment>
<comment type="similarity">
    <text evidence="1">Belongs to the MsrB Met sulfoxide reductase family.</text>
</comment>
<feature type="chain" id="PRO_1000068292" description="Peptide methionine sulfoxide reductase MsrB">
    <location>
        <begin position="1"/>
        <end position="137"/>
    </location>
</feature>
<feature type="domain" description="MsrB" evidence="2">
    <location>
        <begin position="7"/>
        <end position="129"/>
    </location>
</feature>
<feature type="active site" description="Nucleophile" evidence="2">
    <location>
        <position position="118"/>
    </location>
</feature>
<feature type="binding site" evidence="2">
    <location>
        <position position="46"/>
    </location>
    <ligand>
        <name>Zn(2+)</name>
        <dbReference type="ChEBI" id="CHEBI:29105"/>
    </ligand>
</feature>
<feature type="binding site" evidence="2">
    <location>
        <position position="49"/>
    </location>
    <ligand>
        <name>Zn(2+)</name>
        <dbReference type="ChEBI" id="CHEBI:29105"/>
    </ligand>
</feature>
<feature type="binding site" evidence="2">
    <location>
        <position position="95"/>
    </location>
    <ligand>
        <name>Zn(2+)</name>
        <dbReference type="ChEBI" id="CHEBI:29105"/>
    </ligand>
</feature>
<feature type="binding site" evidence="2">
    <location>
        <position position="98"/>
    </location>
    <ligand>
        <name>Zn(2+)</name>
        <dbReference type="ChEBI" id="CHEBI:29105"/>
    </ligand>
</feature>
<accession>Q32GC7</accession>
<proteinExistence type="inferred from homology"/>
<dbReference type="EC" id="1.8.4.12" evidence="1"/>
<dbReference type="EMBL" id="CP000034">
    <property type="protein sequence ID" value="ABB61628.1"/>
    <property type="molecule type" value="Genomic_DNA"/>
</dbReference>
<dbReference type="RefSeq" id="WP_001284607.1">
    <property type="nucleotide sequence ID" value="NC_007606.1"/>
</dbReference>
<dbReference type="RefSeq" id="YP_403119.1">
    <property type="nucleotide sequence ID" value="NC_007606.1"/>
</dbReference>
<dbReference type="SMR" id="Q32GC7"/>
<dbReference type="STRING" id="300267.SDY_1489"/>
<dbReference type="EnsemblBacteria" id="ABB61628">
    <property type="protein sequence ID" value="ABB61628"/>
    <property type="gene ID" value="SDY_1489"/>
</dbReference>
<dbReference type="KEGG" id="sdy:SDY_1489"/>
<dbReference type="PATRIC" id="fig|300267.13.peg.1777"/>
<dbReference type="HOGENOM" id="CLU_031040_8_5_6"/>
<dbReference type="Proteomes" id="UP000002716">
    <property type="component" value="Chromosome"/>
</dbReference>
<dbReference type="GO" id="GO:0005737">
    <property type="term" value="C:cytoplasm"/>
    <property type="evidence" value="ECO:0007669"/>
    <property type="project" value="TreeGrafter"/>
</dbReference>
<dbReference type="GO" id="GO:0033743">
    <property type="term" value="F:peptide-methionine (R)-S-oxide reductase activity"/>
    <property type="evidence" value="ECO:0007669"/>
    <property type="project" value="UniProtKB-UniRule"/>
</dbReference>
<dbReference type="GO" id="GO:0008270">
    <property type="term" value="F:zinc ion binding"/>
    <property type="evidence" value="ECO:0007669"/>
    <property type="project" value="UniProtKB-UniRule"/>
</dbReference>
<dbReference type="GO" id="GO:0030091">
    <property type="term" value="P:protein repair"/>
    <property type="evidence" value="ECO:0007669"/>
    <property type="project" value="InterPro"/>
</dbReference>
<dbReference type="GO" id="GO:0006979">
    <property type="term" value="P:response to oxidative stress"/>
    <property type="evidence" value="ECO:0007669"/>
    <property type="project" value="InterPro"/>
</dbReference>
<dbReference type="FunFam" id="2.170.150.20:FF:000001">
    <property type="entry name" value="Peptide methionine sulfoxide reductase MsrB"/>
    <property type="match status" value="1"/>
</dbReference>
<dbReference type="Gene3D" id="2.170.150.20">
    <property type="entry name" value="Peptide methionine sulfoxide reductase"/>
    <property type="match status" value="1"/>
</dbReference>
<dbReference type="HAMAP" id="MF_01400">
    <property type="entry name" value="MsrB"/>
    <property type="match status" value="1"/>
</dbReference>
<dbReference type="InterPro" id="IPR028427">
    <property type="entry name" value="Met_Sox_Rdtase_MsrB"/>
</dbReference>
<dbReference type="InterPro" id="IPR002579">
    <property type="entry name" value="Met_Sox_Rdtase_MsrB_dom"/>
</dbReference>
<dbReference type="InterPro" id="IPR011057">
    <property type="entry name" value="Mss4-like_sf"/>
</dbReference>
<dbReference type="NCBIfam" id="TIGR00357">
    <property type="entry name" value="peptide-methionine (R)-S-oxide reductase MsrB"/>
    <property type="match status" value="1"/>
</dbReference>
<dbReference type="PANTHER" id="PTHR10173">
    <property type="entry name" value="METHIONINE SULFOXIDE REDUCTASE"/>
    <property type="match status" value="1"/>
</dbReference>
<dbReference type="PANTHER" id="PTHR10173:SF52">
    <property type="entry name" value="METHIONINE-R-SULFOXIDE REDUCTASE B1"/>
    <property type="match status" value="1"/>
</dbReference>
<dbReference type="Pfam" id="PF01641">
    <property type="entry name" value="SelR"/>
    <property type="match status" value="1"/>
</dbReference>
<dbReference type="SUPFAM" id="SSF51316">
    <property type="entry name" value="Mss4-like"/>
    <property type="match status" value="1"/>
</dbReference>
<dbReference type="PROSITE" id="PS51790">
    <property type="entry name" value="MSRB"/>
    <property type="match status" value="1"/>
</dbReference>
<protein>
    <recommendedName>
        <fullName evidence="1">Peptide methionine sulfoxide reductase MsrB</fullName>
        <ecNumber evidence="1">1.8.4.12</ecNumber>
    </recommendedName>
    <alternativeName>
        <fullName evidence="1">Peptide-methionine (R)-S-oxide reductase</fullName>
    </alternativeName>
</protein>
<name>MSRB_SHIDS</name>
<keyword id="KW-0479">Metal-binding</keyword>
<keyword id="KW-0560">Oxidoreductase</keyword>
<keyword id="KW-1185">Reference proteome</keyword>
<keyword id="KW-0862">Zinc</keyword>
<evidence type="ECO:0000255" key="1">
    <source>
        <dbReference type="HAMAP-Rule" id="MF_01400"/>
    </source>
</evidence>
<evidence type="ECO:0000255" key="2">
    <source>
        <dbReference type="PROSITE-ProRule" id="PRU01126"/>
    </source>
</evidence>
<gene>
    <name evidence="1" type="primary">msrB</name>
    <name type="ordered locus">SDY_1489</name>
</gene>